<name>MNTH_ECOLC</name>
<feature type="chain" id="PRO_1000078109" description="Divalent metal cation transporter MntH">
    <location>
        <begin position="1"/>
        <end position="412"/>
    </location>
</feature>
<feature type="topological domain" description="Cytoplasmic" evidence="1">
    <location>
        <begin position="1"/>
        <end position="19"/>
    </location>
</feature>
<feature type="transmembrane region" description="Helical" evidence="1">
    <location>
        <begin position="20"/>
        <end position="39"/>
    </location>
</feature>
<feature type="topological domain" description="Periplasmic" evidence="1">
    <location>
        <begin position="40"/>
        <end position="51"/>
    </location>
</feature>
<feature type="transmembrane region" description="Helical" evidence="1">
    <location>
        <begin position="52"/>
        <end position="71"/>
    </location>
</feature>
<feature type="topological domain" description="Cytoplasmic" evidence="1">
    <location>
        <begin position="72"/>
        <end position="95"/>
    </location>
</feature>
<feature type="transmembrane region" description="Helical" evidence="1">
    <location>
        <begin position="96"/>
        <end position="118"/>
    </location>
</feature>
<feature type="topological domain" description="Periplasmic" evidence="1">
    <location>
        <begin position="119"/>
        <end position="125"/>
    </location>
</feature>
<feature type="transmembrane region" description="Helical" evidence="1">
    <location>
        <begin position="126"/>
        <end position="145"/>
    </location>
</feature>
<feature type="topological domain" description="Cytoplasmic" evidence="1">
    <location>
        <begin position="146"/>
        <end position="155"/>
    </location>
</feature>
<feature type="transmembrane region" description="Helical" evidence="1">
    <location>
        <begin position="156"/>
        <end position="175"/>
    </location>
</feature>
<feature type="topological domain" description="Periplasmic" evidence="1">
    <location>
        <begin position="176"/>
        <end position="196"/>
    </location>
</feature>
<feature type="transmembrane region" description="Helical" evidence="1">
    <location>
        <begin position="197"/>
        <end position="220"/>
    </location>
</feature>
<feature type="topological domain" description="Cytoplasmic" evidence="1">
    <location>
        <begin position="221"/>
        <end position="238"/>
    </location>
</feature>
<feature type="transmembrane region" description="Helical" evidence="1">
    <location>
        <begin position="239"/>
        <end position="258"/>
    </location>
</feature>
<feature type="topological domain" description="Periplasmic" evidence="1">
    <location>
        <begin position="259"/>
        <end position="276"/>
    </location>
</feature>
<feature type="transmembrane region" description="Helical" evidence="1">
    <location>
        <begin position="277"/>
        <end position="297"/>
    </location>
</feature>
<feature type="topological domain" description="Cytoplasmic" evidence="1">
    <location>
        <begin position="298"/>
        <end position="327"/>
    </location>
</feature>
<feature type="transmembrane region" description="Helical" evidence="1">
    <location>
        <begin position="328"/>
        <end position="344"/>
    </location>
</feature>
<feature type="topological domain" description="Periplasmic" evidence="1">
    <location>
        <begin position="345"/>
        <end position="350"/>
    </location>
</feature>
<feature type="transmembrane region" description="Helical" evidence="1">
    <location>
        <begin position="351"/>
        <end position="370"/>
    </location>
</feature>
<feature type="topological domain" description="Cytoplasmic" evidence="1">
    <location>
        <begin position="371"/>
        <end position="387"/>
    </location>
</feature>
<feature type="transmembrane region" description="Helical" evidence="1">
    <location>
        <begin position="388"/>
        <end position="406"/>
    </location>
</feature>
<feature type="topological domain" description="Periplasmic" evidence="1">
    <location>
        <begin position="407"/>
        <end position="412"/>
    </location>
</feature>
<sequence length="412" mass="44194">MTNYRVESSSGRAARKMRLALMGPAFIAAIGYIDPGNFATNIQAGASFGYQLLWVVVWANLMAMLIQILSAKLGIATGKNLAEQIRDHYPRPVVWFYWVQAEIIAMATDLAEFIGAAIGFKLILGVSLLQGAVLTGIATFLILMLQRRGQKPLEKVIGGLLLFVAAAYIVELIFSQPNLAQLGKGMVIPSLPTSEAVFLAAGVLGATIMPHVIYLHSSLTQHLHGGSRQQRYSATKWDVAIAMTIAGFVNLAMMATAAAAFHFSGHTGVADLDEAYLTLQPLLSHAAATVFGLSLVAAGLSSTVVGTLAGQVVMQGFIRFHIPLWVRRTVTMLPSFIVILMGLDPTRILVMSQVLLSFGIALALVPLLIFTSDSKLMGDLVNSKRVKQTGWVIVVLVVALNIWLLVGTALGL</sequence>
<protein>
    <recommendedName>
        <fullName evidence="1">Divalent metal cation transporter MntH</fullName>
    </recommendedName>
</protein>
<organism>
    <name type="scientific">Escherichia coli (strain ATCC 8739 / DSM 1576 / NBRC 3972 / NCIMB 8545 / WDCM 00012 / Crooks)</name>
    <dbReference type="NCBI Taxonomy" id="481805"/>
    <lineage>
        <taxon>Bacteria</taxon>
        <taxon>Pseudomonadati</taxon>
        <taxon>Pseudomonadota</taxon>
        <taxon>Gammaproteobacteria</taxon>
        <taxon>Enterobacterales</taxon>
        <taxon>Enterobacteriaceae</taxon>
        <taxon>Escherichia</taxon>
    </lineage>
</organism>
<proteinExistence type="inferred from homology"/>
<gene>
    <name evidence="1" type="primary">mntH</name>
    <name type="ordered locus">EcolC_1278</name>
</gene>
<keyword id="KW-0997">Cell inner membrane</keyword>
<keyword id="KW-1003">Cell membrane</keyword>
<keyword id="KW-0406">Ion transport</keyword>
<keyword id="KW-0472">Membrane</keyword>
<keyword id="KW-0769">Symport</keyword>
<keyword id="KW-0812">Transmembrane</keyword>
<keyword id="KW-1133">Transmembrane helix</keyword>
<keyword id="KW-0813">Transport</keyword>
<accession>B1IX71</accession>
<dbReference type="EMBL" id="CP000946">
    <property type="protein sequence ID" value="ACA76944.1"/>
    <property type="molecule type" value="Genomic_DNA"/>
</dbReference>
<dbReference type="RefSeq" id="WP_000186369.1">
    <property type="nucleotide sequence ID" value="NZ_MTFT01000028.1"/>
</dbReference>
<dbReference type="SMR" id="B1IX71"/>
<dbReference type="KEGG" id="ecl:EcolC_1278"/>
<dbReference type="HOGENOM" id="CLU_020088_2_0_6"/>
<dbReference type="GO" id="GO:0005886">
    <property type="term" value="C:plasma membrane"/>
    <property type="evidence" value="ECO:0007669"/>
    <property type="project" value="UniProtKB-SubCell"/>
</dbReference>
<dbReference type="GO" id="GO:0015086">
    <property type="term" value="F:cadmium ion transmembrane transporter activity"/>
    <property type="evidence" value="ECO:0007669"/>
    <property type="project" value="TreeGrafter"/>
</dbReference>
<dbReference type="GO" id="GO:0005384">
    <property type="term" value="F:manganese ion transmembrane transporter activity"/>
    <property type="evidence" value="ECO:0007669"/>
    <property type="project" value="TreeGrafter"/>
</dbReference>
<dbReference type="GO" id="GO:0046872">
    <property type="term" value="F:metal ion binding"/>
    <property type="evidence" value="ECO:0007669"/>
    <property type="project" value="UniProtKB-UniRule"/>
</dbReference>
<dbReference type="GO" id="GO:0015293">
    <property type="term" value="F:symporter activity"/>
    <property type="evidence" value="ECO:0007669"/>
    <property type="project" value="UniProtKB-UniRule"/>
</dbReference>
<dbReference type="GO" id="GO:0034755">
    <property type="term" value="P:iron ion transmembrane transport"/>
    <property type="evidence" value="ECO:0007669"/>
    <property type="project" value="TreeGrafter"/>
</dbReference>
<dbReference type="HAMAP" id="MF_00221">
    <property type="entry name" value="NRAMP"/>
    <property type="match status" value="1"/>
</dbReference>
<dbReference type="InterPro" id="IPR001046">
    <property type="entry name" value="NRAMP_fam"/>
</dbReference>
<dbReference type="NCBIfam" id="TIGR01197">
    <property type="entry name" value="nramp"/>
    <property type="match status" value="1"/>
</dbReference>
<dbReference type="NCBIfam" id="NF037982">
    <property type="entry name" value="Nramp_1"/>
    <property type="match status" value="1"/>
</dbReference>
<dbReference type="NCBIfam" id="NF001923">
    <property type="entry name" value="PRK00701.1"/>
    <property type="match status" value="1"/>
</dbReference>
<dbReference type="PANTHER" id="PTHR11706:SF33">
    <property type="entry name" value="NATURAL RESISTANCE-ASSOCIATED MACROPHAGE PROTEIN 2"/>
    <property type="match status" value="1"/>
</dbReference>
<dbReference type="PANTHER" id="PTHR11706">
    <property type="entry name" value="SOLUTE CARRIER PROTEIN FAMILY 11 MEMBER"/>
    <property type="match status" value="1"/>
</dbReference>
<dbReference type="Pfam" id="PF01566">
    <property type="entry name" value="Nramp"/>
    <property type="match status" value="1"/>
</dbReference>
<dbReference type="PRINTS" id="PR00447">
    <property type="entry name" value="NATRESASSCMP"/>
</dbReference>
<evidence type="ECO:0000255" key="1">
    <source>
        <dbReference type="HAMAP-Rule" id="MF_00221"/>
    </source>
</evidence>
<reference key="1">
    <citation type="submission" date="2008-02" db="EMBL/GenBank/DDBJ databases">
        <title>Complete sequence of Escherichia coli C str. ATCC 8739.</title>
        <authorList>
            <person name="Copeland A."/>
            <person name="Lucas S."/>
            <person name="Lapidus A."/>
            <person name="Glavina del Rio T."/>
            <person name="Dalin E."/>
            <person name="Tice H."/>
            <person name="Bruce D."/>
            <person name="Goodwin L."/>
            <person name="Pitluck S."/>
            <person name="Kiss H."/>
            <person name="Brettin T."/>
            <person name="Detter J.C."/>
            <person name="Han C."/>
            <person name="Kuske C.R."/>
            <person name="Schmutz J."/>
            <person name="Larimer F."/>
            <person name="Land M."/>
            <person name="Hauser L."/>
            <person name="Kyrpides N."/>
            <person name="Mikhailova N."/>
            <person name="Ingram L."/>
            <person name="Richardson P."/>
        </authorList>
    </citation>
    <scope>NUCLEOTIDE SEQUENCE [LARGE SCALE GENOMIC DNA]</scope>
    <source>
        <strain>ATCC 8739 / DSM 1576 / NBRC 3972 / NCIMB 8545 / WDCM 00012 / Crooks</strain>
    </source>
</reference>
<comment type="function">
    <text evidence="1">H(+)-stimulated, divalent metal cation uptake system.</text>
</comment>
<comment type="subcellular location">
    <subcellularLocation>
        <location evidence="1">Cell inner membrane</location>
        <topology evidence="1">Multi-pass membrane protein</topology>
    </subcellularLocation>
</comment>
<comment type="similarity">
    <text evidence="1">Belongs to the NRAMP family.</text>
</comment>